<sequence>MKLHSSSKIPNHAWLSDARMNNPSETSKSSESGDGNTGTQTNGLDFQKQAVPIGAITSAQAQALLGHLHQVQLAGTSLQAAAQSLNVQTKFKEEPGEPTQAVQPSQQPSLQAAIPQTQLMVAGGPITGLTLTPAQQQLLLQQAQAQLLAAAVQHSASQQHSAAGATISASAATPMTQIPLSQPIQIAQDLQQLQQLQQQNLNLQQFVLVHPTTNLPPAQFIISQTPQGQQGLLQAQNLLTQLPQQSQANLLQSQPSITLTSQPATPTRTIAATPVQQLPQSQTTPKRIDTPSLEEPSDLEELEQFAKTFKQRRIKLGFTQGDVGLAMGKLYGNDFSQTTISRFEALNLSFKNMCKLKPLLEKWLNDAENITSDSSLSNQSVLNSPGHGMEGLNRRRKKRTSIETNIRVALEKSFLENQKPTSEEITMIADQLNMEKEVIRVWFCNRRQKEKRINPPSSGGSSSSPIKSLFSSANPLVATTPSLVTSSTATTLTVNPVLPLTSAAAITSFPVPGTTGTSSANTATVISTAPPVSSVLTSPSLSPSPSATAATSEASTASGTSTTHTTSTPLTSPLSTGQVMVTASGIHTAATALQGAAQLPTSASLAAMAAAAGLNPGLMAPSQFAAGGALFSLNPGALGSALSPALMSNSTLATIQALASSGSLPITSLDATGNLVFANAGGTPNIVTAPLFLNPQNLSLLTSNPVSLVSAASTGVTGPITSLHATTSSVDSVQNTLFTVASASGAASTTTSASKAQ</sequence>
<evidence type="ECO:0000250" key="1">
    <source>
        <dbReference type="UniProtKB" id="P16143"/>
    </source>
</evidence>
<evidence type="ECO:0000255" key="2"/>
<evidence type="ECO:0000255" key="3">
    <source>
        <dbReference type="PROSITE-ProRule" id="PRU00108"/>
    </source>
</evidence>
<evidence type="ECO:0000255" key="4">
    <source>
        <dbReference type="PROSITE-ProRule" id="PRU00530"/>
    </source>
</evidence>
<evidence type="ECO:0000256" key="5">
    <source>
        <dbReference type="SAM" id="MobiDB-lite"/>
    </source>
</evidence>
<evidence type="ECO:0000312" key="6">
    <source>
        <dbReference type="EMBL" id="CAJ82126.1"/>
    </source>
</evidence>
<name>PO2F1_XENTR</name>
<proteinExistence type="evidence at transcript level"/>
<feature type="chain" id="PRO_0000389618" description="POU domain, class 2, transcription factor 1">
    <location>
        <begin position="1"/>
        <end position="757"/>
    </location>
</feature>
<feature type="domain" description="POU-specific" evidence="4">
    <location>
        <begin position="294"/>
        <end position="368"/>
    </location>
</feature>
<feature type="DNA-binding region" description="Homeobox" evidence="3">
    <location>
        <begin position="395"/>
        <end position="454"/>
    </location>
</feature>
<feature type="region of interest" description="Disordered" evidence="5">
    <location>
        <begin position="1"/>
        <end position="43"/>
    </location>
</feature>
<feature type="region of interest" description="Disordered" evidence="5">
    <location>
        <begin position="271"/>
        <end position="295"/>
    </location>
</feature>
<feature type="region of interest" description="Disordered" evidence="5">
    <location>
        <begin position="375"/>
        <end position="398"/>
    </location>
</feature>
<feature type="region of interest" description="Disordered" evidence="5">
    <location>
        <begin position="532"/>
        <end position="574"/>
    </location>
</feature>
<feature type="compositionally biased region" description="Polar residues" evidence="5">
    <location>
        <begin position="19"/>
        <end position="43"/>
    </location>
</feature>
<feature type="compositionally biased region" description="Polar residues" evidence="5">
    <location>
        <begin position="275"/>
        <end position="285"/>
    </location>
</feature>
<dbReference type="EMBL" id="CR942771">
    <property type="protein sequence ID" value="CAJ82126.1"/>
    <property type="molecule type" value="mRNA"/>
</dbReference>
<dbReference type="RefSeq" id="NP_001016337.2">
    <property type="nucleotide sequence ID" value="NM_001016337.3"/>
</dbReference>
<dbReference type="RefSeq" id="XP_012812409.1">
    <property type="nucleotide sequence ID" value="XM_012956955.3"/>
</dbReference>
<dbReference type="SMR" id="Q28BL7"/>
<dbReference type="FunCoup" id="Q28BL7">
    <property type="interactions" value="2968"/>
</dbReference>
<dbReference type="STRING" id="8364.ENSXETP00000033002"/>
<dbReference type="PaxDb" id="8364-ENSXETP00000013682"/>
<dbReference type="GeneID" id="549091"/>
<dbReference type="KEGG" id="xtr:549091"/>
<dbReference type="AGR" id="Xenbase:XB-GENE-853992"/>
<dbReference type="CTD" id="5451"/>
<dbReference type="Xenbase" id="XB-GENE-853992">
    <property type="gene designation" value="pou2f1"/>
</dbReference>
<dbReference type="eggNOG" id="KOG3802">
    <property type="taxonomic scope" value="Eukaryota"/>
</dbReference>
<dbReference type="HOGENOM" id="CLU_013065_4_0_1"/>
<dbReference type="InParanoid" id="Q28BL7"/>
<dbReference type="OrthoDB" id="6358449at2759"/>
<dbReference type="Reactome" id="R-XTR-6807505">
    <property type="pathway name" value="RNA polymerase II transcribes snRNA genes"/>
</dbReference>
<dbReference type="Proteomes" id="UP000008143">
    <property type="component" value="Chromosome 2"/>
</dbReference>
<dbReference type="Bgee" id="ENSXETG00000006231">
    <property type="expression patterns" value="Expressed in 4-cell stage embryo and 14 other cell types or tissues"/>
</dbReference>
<dbReference type="GO" id="GO:0005737">
    <property type="term" value="C:cytoplasm"/>
    <property type="evidence" value="ECO:0000250"/>
    <property type="project" value="UniProtKB"/>
</dbReference>
<dbReference type="GO" id="GO:0005634">
    <property type="term" value="C:nucleus"/>
    <property type="evidence" value="ECO:0000250"/>
    <property type="project" value="UniProtKB"/>
</dbReference>
<dbReference type="GO" id="GO:0005667">
    <property type="term" value="C:transcription regulator complex"/>
    <property type="evidence" value="ECO:0000250"/>
    <property type="project" value="UniProtKB"/>
</dbReference>
<dbReference type="GO" id="GO:0000981">
    <property type="term" value="F:DNA-binding transcription factor activity, RNA polymerase II-specific"/>
    <property type="evidence" value="ECO:0007669"/>
    <property type="project" value="InterPro"/>
</dbReference>
<dbReference type="GO" id="GO:0043565">
    <property type="term" value="F:sequence-specific DNA binding"/>
    <property type="evidence" value="ECO:0000250"/>
    <property type="project" value="UniProtKB"/>
</dbReference>
<dbReference type="GO" id="GO:0007219">
    <property type="term" value="P:Notch signaling pathway"/>
    <property type="evidence" value="ECO:0000250"/>
    <property type="project" value="UniProtKB"/>
</dbReference>
<dbReference type="GO" id="GO:0045893">
    <property type="term" value="P:positive regulation of DNA-templated transcription"/>
    <property type="evidence" value="ECO:0000250"/>
    <property type="project" value="UniProtKB"/>
</dbReference>
<dbReference type="GO" id="GO:0045944">
    <property type="term" value="P:positive regulation of transcription by RNA polymerase II"/>
    <property type="evidence" value="ECO:0000250"/>
    <property type="project" value="UniProtKB"/>
</dbReference>
<dbReference type="GO" id="GO:0060019">
    <property type="term" value="P:radial glial cell differentiation"/>
    <property type="evidence" value="ECO:0000250"/>
    <property type="project" value="UniProtKB"/>
</dbReference>
<dbReference type="GO" id="GO:0042981">
    <property type="term" value="P:regulation of apoptotic process"/>
    <property type="evidence" value="ECO:0000250"/>
    <property type="project" value="UniProtKB"/>
</dbReference>
<dbReference type="CDD" id="cd00086">
    <property type="entry name" value="homeodomain"/>
    <property type="match status" value="1"/>
</dbReference>
<dbReference type="FunFam" id="1.10.10.60:FF:000005">
    <property type="entry name" value="POU domain protein"/>
    <property type="match status" value="1"/>
</dbReference>
<dbReference type="FunFam" id="1.10.260.40:FF:000001">
    <property type="entry name" value="POU domain protein"/>
    <property type="match status" value="1"/>
</dbReference>
<dbReference type="Gene3D" id="1.10.10.60">
    <property type="entry name" value="Homeodomain-like"/>
    <property type="match status" value="1"/>
</dbReference>
<dbReference type="Gene3D" id="1.10.260.40">
    <property type="entry name" value="lambda repressor-like DNA-binding domains"/>
    <property type="match status" value="1"/>
</dbReference>
<dbReference type="InterPro" id="IPR001356">
    <property type="entry name" value="HD"/>
</dbReference>
<dbReference type="InterPro" id="IPR017970">
    <property type="entry name" value="Homeobox_CS"/>
</dbReference>
<dbReference type="InterPro" id="IPR009057">
    <property type="entry name" value="Homeodomain-like_sf"/>
</dbReference>
<dbReference type="InterPro" id="IPR010982">
    <property type="entry name" value="Lambda_DNA-bd_dom_sf"/>
</dbReference>
<dbReference type="InterPro" id="IPR013847">
    <property type="entry name" value="POU"/>
</dbReference>
<dbReference type="InterPro" id="IPR045703">
    <property type="entry name" value="POU2F1_C"/>
</dbReference>
<dbReference type="InterPro" id="IPR000327">
    <property type="entry name" value="POU_dom"/>
</dbReference>
<dbReference type="InterPro" id="IPR050255">
    <property type="entry name" value="POU_domain_TF"/>
</dbReference>
<dbReference type="InterPro" id="IPR000972">
    <property type="entry name" value="TF_octamer"/>
</dbReference>
<dbReference type="PANTHER" id="PTHR11636">
    <property type="entry name" value="POU DOMAIN"/>
    <property type="match status" value="1"/>
</dbReference>
<dbReference type="PANTHER" id="PTHR11636:SF47">
    <property type="entry name" value="POU DOMAIN, CLASS 2, TRANSCRIPTION FACTOR 1"/>
    <property type="match status" value="1"/>
</dbReference>
<dbReference type="Pfam" id="PF00046">
    <property type="entry name" value="Homeodomain"/>
    <property type="match status" value="1"/>
</dbReference>
<dbReference type="Pfam" id="PF00157">
    <property type="entry name" value="Pou"/>
    <property type="match status" value="1"/>
</dbReference>
<dbReference type="Pfam" id="PF19536">
    <property type="entry name" value="POU2F1_C"/>
    <property type="match status" value="1"/>
</dbReference>
<dbReference type="PRINTS" id="PR00029">
    <property type="entry name" value="OCTAMER"/>
</dbReference>
<dbReference type="PRINTS" id="PR00028">
    <property type="entry name" value="POUDOMAIN"/>
</dbReference>
<dbReference type="SMART" id="SM00389">
    <property type="entry name" value="HOX"/>
    <property type="match status" value="1"/>
</dbReference>
<dbReference type="SMART" id="SM00352">
    <property type="entry name" value="POU"/>
    <property type="match status" value="1"/>
</dbReference>
<dbReference type="SUPFAM" id="SSF46689">
    <property type="entry name" value="Homeodomain-like"/>
    <property type="match status" value="1"/>
</dbReference>
<dbReference type="SUPFAM" id="SSF47413">
    <property type="entry name" value="lambda repressor-like DNA-binding domains"/>
    <property type="match status" value="1"/>
</dbReference>
<dbReference type="PROSITE" id="PS00027">
    <property type="entry name" value="HOMEOBOX_1"/>
    <property type="match status" value="1"/>
</dbReference>
<dbReference type="PROSITE" id="PS50071">
    <property type="entry name" value="HOMEOBOX_2"/>
    <property type="match status" value="1"/>
</dbReference>
<dbReference type="PROSITE" id="PS00035">
    <property type="entry name" value="POU_1"/>
    <property type="match status" value="1"/>
</dbReference>
<dbReference type="PROSITE" id="PS00465">
    <property type="entry name" value="POU_2"/>
    <property type="match status" value="1"/>
</dbReference>
<dbReference type="PROSITE" id="PS51179">
    <property type="entry name" value="POU_3"/>
    <property type="match status" value="1"/>
</dbReference>
<comment type="function">
    <text evidence="1">Transcription factor that binds to the octamer motif (5'-ATTTGCAT-3') and activates the promoters of the genes for some small nuclear RNAs (snRNA) and histone H2B. Acts downstream of Notch signaling during radial glia formation. Regulates apoptosis, possibly via an FGF-signaling pathway (By similarity).</text>
</comment>
<comment type="subcellular location">
    <subcellularLocation>
        <location evidence="1">Cytoplasm</location>
    </subcellularLocation>
    <subcellularLocation>
        <location evidence="1 3 4">Nucleus</location>
    </subcellularLocation>
    <text evidence="1">Retained in the cytoplasm during early development, then gradually translocates to the nucleus around the mid-blastula transition (MBT).</text>
</comment>
<comment type="domain">
    <text evidence="1">The POU domain controls nuclear translocation.</text>
</comment>
<comment type="similarity">
    <text evidence="2">Belongs to the POU transcription factor family. Class-2 subfamily.</text>
</comment>
<reference evidence="6" key="1">
    <citation type="submission" date="2006-10" db="EMBL/GenBank/DDBJ databases">
        <authorList>
            <consortium name="Sanger Xenopus tropicalis EST/cDNA project"/>
        </authorList>
    </citation>
    <scope>NUCLEOTIDE SEQUENCE [LARGE SCALE MRNA]</scope>
    <source>
        <tissue evidence="6">Egg</tissue>
    </source>
</reference>
<keyword id="KW-0010">Activator</keyword>
<keyword id="KW-0963">Cytoplasm</keyword>
<keyword id="KW-0217">Developmental protein</keyword>
<keyword id="KW-0238">DNA-binding</keyword>
<keyword id="KW-0371">Homeobox</keyword>
<keyword id="KW-0539">Nucleus</keyword>
<keyword id="KW-1185">Reference proteome</keyword>
<keyword id="KW-0804">Transcription</keyword>
<keyword id="KW-0805">Transcription regulation</keyword>
<protein>
    <recommendedName>
        <fullName evidence="6">POU domain, class 2, transcription factor 1</fullName>
    </recommendedName>
    <alternativeName>
        <fullName>Octamer-binding protein 1</fullName>
        <shortName evidence="1">Oct-1</shortName>
    </alternativeName>
    <alternativeName>
        <fullName evidence="1">Octamer-binding transcription factor 1</fullName>
        <shortName>OTF-1</shortName>
    </alternativeName>
</protein>
<accession>Q28BL7</accession>
<gene>
    <name evidence="6" type="primary">pou2f1</name>
    <name evidence="1" type="synonym">oct-1</name>
    <name evidence="1" type="synonym">oct1</name>
    <name type="ORF">TEgg001p15.1</name>
</gene>
<organism>
    <name type="scientific">Xenopus tropicalis</name>
    <name type="common">Western clawed frog</name>
    <name type="synonym">Silurana tropicalis</name>
    <dbReference type="NCBI Taxonomy" id="8364"/>
    <lineage>
        <taxon>Eukaryota</taxon>
        <taxon>Metazoa</taxon>
        <taxon>Chordata</taxon>
        <taxon>Craniata</taxon>
        <taxon>Vertebrata</taxon>
        <taxon>Euteleostomi</taxon>
        <taxon>Amphibia</taxon>
        <taxon>Batrachia</taxon>
        <taxon>Anura</taxon>
        <taxon>Pipoidea</taxon>
        <taxon>Pipidae</taxon>
        <taxon>Xenopodinae</taxon>
        <taxon>Xenopus</taxon>
        <taxon>Silurana</taxon>
    </lineage>
</organism>